<sequence length="269" mass="28914">MTKHTLEQLAADLRRAAEQGEAIAPLRDLIGIDNAEAAYAIQHINVQYDVVQGRRVVGRKVGLTHPKVQQQLGVDQPDFGTLFADMCYGDNEIIPFSRVLQPRIEAEIALVLNRDLPATDITFDELYNAIEWVLPALEVVGSRIRDWSIQFVDTVADNASCGVYVIGGPAQRPAGLDLKNCAMKMTRNNEEVSSGRGSECLGHPLNAAVWLARKMASLGEPLRAGDIILTGALGPMVAVNAGDRFEAHIEGIGSVAATFSSAAPKGSLS</sequence>
<dbReference type="EC" id="4.2.1.80" evidence="1"/>
<dbReference type="EMBL" id="CP000802">
    <property type="protein sequence ID" value="ABV04801.1"/>
    <property type="molecule type" value="Genomic_DNA"/>
</dbReference>
<dbReference type="RefSeq" id="WP_000160734.1">
    <property type="nucleotide sequence ID" value="NC_009800.1"/>
</dbReference>
<dbReference type="SMR" id="A7ZWZ7"/>
<dbReference type="KEGG" id="ecx:EcHS_A0414"/>
<dbReference type="HOGENOM" id="CLU_060136_4_1_6"/>
<dbReference type="UniPathway" id="UPA00714"/>
<dbReference type="GO" id="GO:0005737">
    <property type="term" value="C:cytoplasm"/>
    <property type="evidence" value="ECO:0007669"/>
    <property type="project" value="TreeGrafter"/>
</dbReference>
<dbReference type="GO" id="GO:0008684">
    <property type="term" value="F:2-oxopent-4-enoate hydratase activity"/>
    <property type="evidence" value="ECO:0007669"/>
    <property type="project" value="UniProtKB-UniRule"/>
</dbReference>
<dbReference type="GO" id="GO:0030145">
    <property type="term" value="F:manganese ion binding"/>
    <property type="evidence" value="ECO:0007669"/>
    <property type="project" value="InterPro"/>
</dbReference>
<dbReference type="GO" id="GO:0019380">
    <property type="term" value="P:3-phenylpropionate catabolic process"/>
    <property type="evidence" value="ECO:0007669"/>
    <property type="project" value="UniProtKB-UniRule"/>
</dbReference>
<dbReference type="FunFam" id="3.90.850.10:FF:000006">
    <property type="entry name" value="2-keto-4-pentenoate hydratase"/>
    <property type="match status" value="1"/>
</dbReference>
<dbReference type="Gene3D" id="3.90.850.10">
    <property type="entry name" value="Fumarylacetoacetase-like, C-terminal domain"/>
    <property type="match status" value="1"/>
</dbReference>
<dbReference type="HAMAP" id="MF_01655">
    <property type="entry name" value="MhpD"/>
    <property type="match status" value="1"/>
</dbReference>
<dbReference type="InterPro" id="IPR011234">
    <property type="entry name" value="Fumarylacetoacetase-like_C"/>
</dbReference>
<dbReference type="InterPro" id="IPR036663">
    <property type="entry name" value="Fumarylacetoacetase_C_sf"/>
</dbReference>
<dbReference type="InterPro" id="IPR050772">
    <property type="entry name" value="Hydratase-Decarb/MhpD_sf"/>
</dbReference>
<dbReference type="InterPro" id="IPR023793">
    <property type="entry name" value="Keto_pentenoate-hydratase"/>
</dbReference>
<dbReference type="NCBIfam" id="NF008461">
    <property type="entry name" value="PRK11342.1"/>
    <property type="match status" value="1"/>
</dbReference>
<dbReference type="PANTHER" id="PTHR30143:SF0">
    <property type="entry name" value="2-KETO-4-PENTENOATE HYDRATASE"/>
    <property type="match status" value="1"/>
</dbReference>
<dbReference type="PANTHER" id="PTHR30143">
    <property type="entry name" value="ACID HYDRATASE"/>
    <property type="match status" value="1"/>
</dbReference>
<dbReference type="Pfam" id="PF01557">
    <property type="entry name" value="FAA_hydrolase"/>
    <property type="match status" value="1"/>
</dbReference>
<dbReference type="SUPFAM" id="SSF56529">
    <property type="entry name" value="FAH"/>
    <property type="match status" value="1"/>
</dbReference>
<feature type="chain" id="PRO_0000337795" description="2-keto-4-pentenoate hydratase">
    <location>
        <begin position="1"/>
        <end position="269"/>
    </location>
</feature>
<name>MHPD_ECOHS</name>
<reference key="1">
    <citation type="journal article" date="2008" name="J. Bacteriol.">
        <title>The pangenome structure of Escherichia coli: comparative genomic analysis of E. coli commensal and pathogenic isolates.</title>
        <authorList>
            <person name="Rasko D.A."/>
            <person name="Rosovitz M.J."/>
            <person name="Myers G.S.A."/>
            <person name="Mongodin E.F."/>
            <person name="Fricke W.F."/>
            <person name="Gajer P."/>
            <person name="Crabtree J."/>
            <person name="Sebaihia M."/>
            <person name="Thomson N.R."/>
            <person name="Chaudhuri R."/>
            <person name="Henderson I.R."/>
            <person name="Sperandio V."/>
            <person name="Ravel J."/>
        </authorList>
    </citation>
    <scope>NUCLEOTIDE SEQUENCE [LARGE SCALE GENOMIC DNA]</scope>
    <source>
        <strain>HS</strain>
    </source>
</reference>
<evidence type="ECO:0000255" key="1">
    <source>
        <dbReference type="HAMAP-Rule" id="MF_01655"/>
    </source>
</evidence>
<gene>
    <name evidence="1" type="primary">mhpD</name>
    <name type="ordered locus">EcHS_A0414</name>
</gene>
<accession>A7ZWZ7</accession>
<comment type="function">
    <text evidence="1">Catalyzes the conversion of 2-hydroxypentadienoic acid (enolic form of 2-oxopent-4-enoate) to 4-hydroxy-2-ketopentanoic acid.</text>
</comment>
<comment type="catalytic activity">
    <reaction evidence="1">
        <text>(S)-4-hydroxy-2-oxopentanoate = (2Z)-2-hydroxypenta-2,4-dienoate + H2O</text>
        <dbReference type="Rhea" id="RHEA:22580"/>
        <dbReference type="ChEBI" id="CHEBI:15377"/>
        <dbReference type="ChEBI" id="CHEBI:67152"/>
        <dbReference type="ChEBI" id="CHEBI:73143"/>
        <dbReference type="EC" id="4.2.1.80"/>
    </reaction>
</comment>
<comment type="cofactor">
    <cofactor evidence="1">
        <name>a divalent metal cation</name>
        <dbReference type="ChEBI" id="CHEBI:60240"/>
    </cofactor>
</comment>
<comment type="pathway">
    <text evidence="1">Aromatic compound metabolism; 3-phenylpropanoate degradation.</text>
</comment>
<comment type="similarity">
    <text evidence="1">Belongs to the hydratase/decarboxylase family. MhpD subfamily.</text>
</comment>
<keyword id="KW-0058">Aromatic hydrocarbons catabolism</keyword>
<keyword id="KW-0456">Lyase</keyword>
<proteinExistence type="inferred from homology"/>
<organism>
    <name type="scientific">Escherichia coli O9:H4 (strain HS)</name>
    <dbReference type="NCBI Taxonomy" id="331112"/>
    <lineage>
        <taxon>Bacteria</taxon>
        <taxon>Pseudomonadati</taxon>
        <taxon>Pseudomonadota</taxon>
        <taxon>Gammaproteobacteria</taxon>
        <taxon>Enterobacterales</taxon>
        <taxon>Enterobacteriaceae</taxon>
        <taxon>Escherichia</taxon>
    </lineage>
</organism>
<protein>
    <recommendedName>
        <fullName evidence="1">2-keto-4-pentenoate hydratase</fullName>
        <ecNumber evidence="1">4.2.1.80</ecNumber>
    </recommendedName>
    <alternativeName>
        <fullName evidence="1">2-hydroxypentadienoic acid hydratase</fullName>
    </alternativeName>
</protein>